<protein>
    <recommendedName>
        <fullName evidence="1">Phosphoribosylformylglycinamidine synthase subunit PurL</fullName>
        <shortName evidence="1">FGAM synthase</shortName>
        <ecNumber evidence="1">6.3.5.3</ecNumber>
    </recommendedName>
    <alternativeName>
        <fullName evidence="1">Formylglycinamide ribonucleotide amidotransferase subunit II</fullName>
        <shortName evidence="1">FGAR amidotransferase II</shortName>
        <shortName evidence="1">FGAR-AT II</shortName>
    </alternativeName>
    <alternativeName>
        <fullName evidence="1">Glutamine amidotransferase PurL</fullName>
    </alternativeName>
    <alternativeName>
        <fullName evidence="1">Phosphoribosylformylglycinamidine synthase subunit II</fullName>
    </alternativeName>
</protein>
<keyword id="KW-0067">ATP-binding</keyword>
<keyword id="KW-0963">Cytoplasm</keyword>
<keyword id="KW-0436">Ligase</keyword>
<keyword id="KW-0460">Magnesium</keyword>
<keyword id="KW-0479">Metal-binding</keyword>
<keyword id="KW-0547">Nucleotide-binding</keyword>
<keyword id="KW-0658">Purine biosynthesis</keyword>
<proteinExistence type="inferred from homology"/>
<comment type="function">
    <text evidence="1">Part of the phosphoribosylformylglycinamidine synthase complex involved in the purines biosynthetic pathway. Catalyzes the ATP-dependent conversion of formylglycinamide ribonucleotide (FGAR) and glutamine to yield formylglycinamidine ribonucleotide (FGAM) and glutamate. The FGAM synthase complex is composed of three subunits. PurQ produces an ammonia molecule by converting glutamine to glutamate. PurL transfers the ammonia molecule to FGAR to form FGAM in an ATP-dependent manner. PurS interacts with PurQ and PurL and is thought to assist in the transfer of the ammonia molecule from PurQ to PurL.</text>
</comment>
<comment type="catalytic activity">
    <reaction evidence="1">
        <text>N(2)-formyl-N(1)-(5-phospho-beta-D-ribosyl)glycinamide + L-glutamine + ATP + H2O = 2-formamido-N(1)-(5-O-phospho-beta-D-ribosyl)acetamidine + L-glutamate + ADP + phosphate + H(+)</text>
        <dbReference type="Rhea" id="RHEA:17129"/>
        <dbReference type="ChEBI" id="CHEBI:15377"/>
        <dbReference type="ChEBI" id="CHEBI:15378"/>
        <dbReference type="ChEBI" id="CHEBI:29985"/>
        <dbReference type="ChEBI" id="CHEBI:30616"/>
        <dbReference type="ChEBI" id="CHEBI:43474"/>
        <dbReference type="ChEBI" id="CHEBI:58359"/>
        <dbReference type="ChEBI" id="CHEBI:147286"/>
        <dbReference type="ChEBI" id="CHEBI:147287"/>
        <dbReference type="ChEBI" id="CHEBI:456216"/>
        <dbReference type="EC" id="6.3.5.3"/>
    </reaction>
</comment>
<comment type="pathway">
    <text evidence="1">Purine metabolism; IMP biosynthesis via de novo pathway; 5-amino-1-(5-phospho-D-ribosyl)imidazole from N(2)-formyl-N(1)-(5-phospho-D-ribosyl)glycinamide: step 1/2.</text>
</comment>
<comment type="subunit">
    <text evidence="1">Monomer. Part of the FGAM synthase complex composed of 1 PurL, 1 PurQ and 2 PurS subunits.</text>
</comment>
<comment type="subcellular location">
    <subcellularLocation>
        <location evidence="1">Cytoplasm</location>
    </subcellularLocation>
</comment>
<comment type="similarity">
    <text evidence="1">Belongs to the FGAMS family.</text>
</comment>
<reference key="1">
    <citation type="journal article" date="2000" name="DNA Res.">
        <title>Complete genome structure of the nitrogen-fixing symbiotic bacterium Mesorhizobium loti.</title>
        <authorList>
            <person name="Kaneko T."/>
            <person name="Nakamura Y."/>
            <person name="Sato S."/>
            <person name="Asamizu E."/>
            <person name="Kato T."/>
            <person name="Sasamoto S."/>
            <person name="Watanabe A."/>
            <person name="Idesawa K."/>
            <person name="Ishikawa A."/>
            <person name="Kawashima K."/>
            <person name="Kimura T."/>
            <person name="Kishida Y."/>
            <person name="Kiyokawa C."/>
            <person name="Kohara M."/>
            <person name="Matsumoto M."/>
            <person name="Matsuno A."/>
            <person name="Mochizuki Y."/>
            <person name="Nakayama S."/>
            <person name="Nakazaki N."/>
            <person name="Shimpo S."/>
            <person name="Sugimoto M."/>
            <person name="Takeuchi C."/>
            <person name="Yamada M."/>
            <person name="Tabata S."/>
        </authorList>
    </citation>
    <scope>NUCLEOTIDE SEQUENCE [LARGE SCALE GENOMIC DNA]</scope>
    <source>
        <strain>LMG 29417 / CECT 9101 / MAFF 303099</strain>
    </source>
</reference>
<gene>
    <name evidence="1" type="primary">purL</name>
    <name type="ordered locus">mll0057</name>
</gene>
<accession>Q98NN7</accession>
<evidence type="ECO:0000255" key="1">
    <source>
        <dbReference type="HAMAP-Rule" id="MF_00420"/>
    </source>
</evidence>
<dbReference type="EC" id="6.3.5.3" evidence="1"/>
<dbReference type="EMBL" id="BA000012">
    <property type="protein sequence ID" value="BAB47724.1"/>
    <property type="molecule type" value="Genomic_DNA"/>
</dbReference>
<dbReference type="RefSeq" id="WP_010909094.1">
    <property type="nucleotide sequence ID" value="NC_002678.2"/>
</dbReference>
<dbReference type="SMR" id="Q98NN7"/>
<dbReference type="KEGG" id="mlo:mll0057"/>
<dbReference type="PATRIC" id="fig|266835.9.peg.44"/>
<dbReference type="eggNOG" id="COG0046">
    <property type="taxonomic scope" value="Bacteria"/>
</dbReference>
<dbReference type="HOGENOM" id="CLU_003100_0_1_5"/>
<dbReference type="UniPathway" id="UPA00074">
    <property type="reaction ID" value="UER00128"/>
</dbReference>
<dbReference type="Proteomes" id="UP000000552">
    <property type="component" value="Chromosome"/>
</dbReference>
<dbReference type="GO" id="GO:0005737">
    <property type="term" value="C:cytoplasm"/>
    <property type="evidence" value="ECO:0007669"/>
    <property type="project" value="UniProtKB-SubCell"/>
</dbReference>
<dbReference type="GO" id="GO:0005524">
    <property type="term" value="F:ATP binding"/>
    <property type="evidence" value="ECO:0007669"/>
    <property type="project" value="UniProtKB-UniRule"/>
</dbReference>
<dbReference type="GO" id="GO:0000287">
    <property type="term" value="F:magnesium ion binding"/>
    <property type="evidence" value="ECO:0007669"/>
    <property type="project" value="UniProtKB-UniRule"/>
</dbReference>
<dbReference type="GO" id="GO:0004642">
    <property type="term" value="F:phosphoribosylformylglycinamidine synthase activity"/>
    <property type="evidence" value="ECO:0007669"/>
    <property type="project" value="UniProtKB-UniRule"/>
</dbReference>
<dbReference type="GO" id="GO:0006189">
    <property type="term" value="P:'de novo' IMP biosynthetic process"/>
    <property type="evidence" value="ECO:0007669"/>
    <property type="project" value="UniProtKB-UniRule"/>
</dbReference>
<dbReference type="CDD" id="cd02203">
    <property type="entry name" value="PurL_repeat1"/>
    <property type="match status" value="1"/>
</dbReference>
<dbReference type="CDD" id="cd02204">
    <property type="entry name" value="PurL_repeat2"/>
    <property type="match status" value="1"/>
</dbReference>
<dbReference type="FunFam" id="3.30.1330.10:FF:000004">
    <property type="entry name" value="Phosphoribosylformylglycinamidine synthase subunit PurL"/>
    <property type="match status" value="1"/>
</dbReference>
<dbReference type="Gene3D" id="3.90.650.10">
    <property type="entry name" value="PurM-like C-terminal domain"/>
    <property type="match status" value="2"/>
</dbReference>
<dbReference type="Gene3D" id="3.30.1330.10">
    <property type="entry name" value="PurM-like, N-terminal domain"/>
    <property type="match status" value="2"/>
</dbReference>
<dbReference type="HAMAP" id="MF_00420">
    <property type="entry name" value="PurL_2"/>
    <property type="match status" value="1"/>
</dbReference>
<dbReference type="InterPro" id="IPR010074">
    <property type="entry name" value="PRibForGlyAmidine_synth_PurL"/>
</dbReference>
<dbReference type="InterPro" id="IPR041609">
    <property type="entry name" value="PurL_linker"/>
</dbReference>
<dbReference type="InterPro" id="IPR010918">
    <property type="entry name" value="PurM-like_C_dom"/>
</dbReference>
<dbReference type="InterPro" id="IPR036676">
    <property type="entry name" value="PurM-like_C_sf"/>
</dbReference>
<dbReference type="InterPro" id="IPR016188">
    <property type="entry name" value="PurM-like_N"/>
</dbReference>
<dbReference type="InterPro" id="IPR036921">
    <property type="entry name" value="PurM-like_N_sf"/>
</dbReference>
<dbReference type="NCBIfam" id="TIGR01736">
    <property type="entry name" value="FGAM_synth_II"/>
    <property type="match status" value="1"/>
</dbReference>
<dbReference type="NCBIfam" id="NF002290">
    <property type="entry name" value="PRK01213.1"/>
    <property type="match status" value="1"/>
</dbReference>
<dbReference type="PANTHER" id="PTHR43555">
    <property type="entry name" value="PHOSPHORIBOSYLFORMYLGLYCINAMIDINE SYNTHASE SUBUNIT PURL"/>
    <property type="match status" value="1"/>
</dbReference>
<dbReference type="PANTHER" id="PTHR43555:SF1">
    <property type="entry name" value="PHOSPHORIBOSYLFORMYLGLYCINAMIDINE SYNTHASE SUBUNIT PURL"/>
    <property type="match status" value="1"/>
</dbReference>
<dbReference type="Pfam" id="PF00586">
    <property type="entry name" value="AIRS"/>
    <property type="match status" value="2"/>
</dbReference>
<dbReference type="Pfam" id="PF02769">
    <property type="entry name" value="AIRS_C"/>
    <property type="match status" value="2"/>
</dbReference>
<dbReference type="Pfam" id="PF18072">
    <property type="entry name" value="FGAR-AT_linker"/>
    <property type="match status" value="1"/>
</dbReference>
<dbReference type="PIRSF" id="PIRSF001587">
    <property type="entry name" value="FGAM_synthase_II"/>
    <property type="match status" value="1"/>
</dbReference>
<dbReference type="SUPFAM" id="SSF56042">
    <property type="entry name" value="PurM C-terminal domain-like"/>
    <property type="match status" value="2"/>
</dbReference>
<dbReference type="SUPFAM" id="SSF55326">
    <property type="entry name" value="PurM N-terminal domain-like"/>
    <property type="match status" value="2"/>
</dbReference>
<name>PURL_RHILO</name>
<sequence>MTISNSVPITPELIAAHGLKPDEYQRILDLVGREPSFTELGIFSAMWNEHCSYKSSKKWLRTLPTTGPQVIQGPGENAGVVDIGDGDCVVFKMESHNHPSFIEPYQGAATGVGGILRDVFTMGARPIAAMNALRFGAPDHPKTRHLVAGVVSGVGGYGNSFGVPTVGGEVNFDARYNGNILVNAFAAGLAKTNAIFLSEAKGVGLPVVYLGAKTGRDGVGGATMASAEFDDKIDEKRPTVQVGDPFTEKCLLEACLELMASGAVIAIQDMGAAGLTCSAVEMGAKGDLGIELDLDKVPVREERMSAYEMMLSESQERMLMVLRPEKEKEAEAIFHKWGLDFAIVGKTTDDLRFRVLHQGDQVADLPIKDLGDKAPEYDRPWIEPKKPAPLAANDIPQADVADALLKLLGGPDLSSRRWVWEQYDTLIQGNSLQLPGGDAGVVRVEGHATKALAFSSDVTPRYCEADPYEGGKQAVAECWRNLTATGALPLAATDNLNFGNPERPEIMGQLVGAVKGIGDACRALGFPIVSGNVSLYNETNGQGILPTPTIGGVGLIADWSKMVRTGFAAQDQMILLVGAPASWGTHLGQSVYFRDIHGRTDGPPPPVDLAHEKRVGDHVRSLIASGIVTAAHDVSDGGIAVALAEMAMASGIGATVPGLVGTDPIPVWFGEDQGRYLLTLSIDPHGDEWDAIRKQQGELGIFAPWIGSTGGDALKLGDAKAIPVGDLKAAHEGWFPRFMDQAS</sequence>
<organism>
    <name type="scientific">Mesorhizobium japonicum (strain LMG 29417 / CECT 9101 / MAFF 303099)</name>
    <name type="common">Mesorhizobium loti (strain MAFF 303099)</name>
    <dbReference type="NCBI Taxonomy" id="266835"/>
    <lineage>
        <taxon>Bacteria</taxon>
        <taxon>Pseudomonadati</taxon>
        <taxon>Pseudomonadota</taxon>
        <taxon>Alphaproteobacteria</taxon>
        <taxon>Hyphomicrobiales</taxon>
        <taxon>Phyllobacteriaceae</taxon>
        <taxon>Mesorhizobium</taxon>
    </lineage>
</organism>
<feature type="chain" id="PRO_0000100481" description="Phosphoribosylformylglycinamidine synthase subunit PurL">
    <location>
        <begin position="1"/>
        <end position="743"/>
    </location>
</feature>
<feature type="active site" evidence="1">
    <location>
        <position position="50"/>
    </location>
</feature>
<feature type="active site" description="Proton acceptor" evidence="1">
    <location>
        <position position="96"/>
    </location>
</feature>
<feature type="binding site" evidence="1">
    <location>
        <position position="53"/>
    </location>
    <ligand>
        <name>ATP</name>
        <dbReference type="ChEBI" id="CHEBI:30616"/>
    </ligand>
</feature>
<feature type="binding site" evidence="1">
    <location>
        <position position="92"/>
    </location>
    <ligand>
        <name>ATP</name>
        <dbReference type="ChEBI" id="CHEBI:30616"/>
    </ligand>
</feature>
<feature type="binding site" evidence="1">
    <location>
        <position position="94"/>
    </location>
    <ligand>
        <name>Mg(2+)</name>
        <dbReference type="ChEBI" id="CHEBI:18420"/>
        <label>1</label>
    </ligand>
</feature>
<feature type="binding site" evidence="1">
    <location>
        <begin position="95"/>
        <end position="98"/>
    </location>
    <ligand>
        <name>substrate</name>
    </ligand>
</feature>
<feature type="binding site" evidence="1">
    <location>
        <position position="117"/>
    </location>
    <ligand>
        <name>substrate</name>
    </ligand>
</feature>
<feature type="binding site" evidence="1">
    <location>
        <position position="118"/>
    </location>
    <ligand>
        <name>Mg(2+)</name>
        <dbReference type="ChEBI" id="CHEBI:18420"/>
        <label>2</label>
    </ligand>
</feature>
<feature type="binding site" evidence="1">
    <location>
        <position position="241"/>
    </location>
    <ligand>
        <name>substrate</name>
    </ligand>
</feature>
<feature type="binding site" evidence="1">
    <location>
        <position position="269"/>
    </location>
    <ligand>
        <name>Mg(2+)</name>
        <dbReference type="ChEBI" id="CHEBI:18420"/>
        <label>2</label>
    </ligand>
</feature>
<feature type="binding site" evidence="1">
    <location>
        <begin position="313"/>
        <end position="315"/>
    </location>
    <ligand>
        <name>substrate</name>
    </ligand>
</feature>
<feature type="binding site" evidence="1">
    <location>
        <position position="494"/>
    </location>
    <ligand>
        <name>ATP</name>
        <dbReference type="ChEBI" id="CHEBI:30616"/>
    </ligand>
</feature>
<feature type="binding site" evidence="1">
    <location>
        <position position="531"/>
    </location>
    <ligand>
        <name>ATP</name>
        <dbReference type="ChEBI" id="CHEBI:30616"/>
    </ligand>
</feature>
<feature type="binding site" evidence="1">
    <location>
        <position position="532"/>
    </location>
    <ligand>
        <name>Mg(2+)</name>
        <dbReference type="ChEBI" id="CHEBI:18420"/>
        <label>1</label>
    </ligand>
</feature>
<feature type="binding site" evidence="1">
    <location>
        <position position="534"/>
    </location>
    <ligand>
        <name>substrate</name>
    </ligand>
</feature>